<accession>Q8XAS8</accession>
<accession>Q7AFM6</accession>
<name>EFEU_ECO57</name>
<organism>
    <name type="scientific">Escherichia coli O157:H7</name>
    <dbReference type="NCBI Taxonomy" id="83334"/>
    <lineage>
        <taxon>Bacteria</taxon>
        <taxon>Pseudomonadati</taxon>
        <taxon>Pseudomonadota</taxon>
        <taxon>Gammaproteobacteria</taxon>
        <taxon>Enterobacterales</taxon>
        <taxon>Enterobacteriaceae</taxon>
        <taxon>Escherichia</taxon>
    </lineage>
</organism>
<evidence type="ECO:0000250" key="1"/>
<evidence type="ECO:0000255" key="2"/>
<evidence type="ECO:0000269" key="3">
    <source>
    </source>
</evidence>
<evidence type="ECO:0000305" key="4"/>
<feature type="chain" id="PRO_0000277544" description="Ferrous iron permease EfeU">
    <location>
        <begin position="1"/>
        <end position="276"/>
    </location>
</feature>
<feature type="topological domain" description="Periplasmic" evidence="2">
    <location>
        <position position="1"/>
    </location>
</feature>
<feature type="transmembrane region" description="Helical" evidence="2">
    <location>
        <begin position="2"/>
        <end position="22"/>
    </location>
</feature>
<feature type="topological domain" description="Cytoplasmic" evidence="2">
    <location>
        <begin position="23"/>
        <end position="34"/>
    </location>
</feature>
<feature type="transmembrane region" description="Helical" evidence="2">
    <location>
        <begin position="35"/>
        <end position="55"/>
    </location>
</feature>
<feature type="topological domain" description="Periplasmic" evidence="2">
    <location>
        <begin position="56"/>
        <end position="69"/>
    </location>
</feature>
<feature type="transmembrane region" description="Helical" evidence="2">
    <location>
        <begin position="70"/>
        <end position="90"/>
    </location>
</feature>
<feature type="topological domain" description="Cytoplasmic" evidence="2">
    <location>
        <begin position="91"/>
        <end position="118"/>
    </location>
</feature>
<feature type="transmembrane region" description="Helical" evidence="2">
    <location>
        <begin position="119"/>
        <end position="139"/>
    </location>
</feature>
<feature type="topological domain" description="Periplasmic" evidence="2">
    <location>
        <begin position="140"/>
        <end position="147"/>
    </location>
</feature>
<feature type="transmembrane region" description="Helical" evidence="2">
    <location>
        <begin position="148"/>
        <end position="168"/>
    </location>
</feature>
<feature type="topological domain" description="Cytoplasmic" evidence="2">
    <location>
        <begin position="169"/>
        <end position="179"/>
    </location>
</feature>
<feature type="transmembrane region" description="Helical" evidence="2">
    <location>
        <begin position="180"/>
        <end position="200"/>
    </location>
</feature>
<feature type="topological domain" description="Periplasmic" evidence="2">
    <location>
        <begin position="201"/>
        <end position="244"/>
    </location>
</feature>
<feature type="transmembrane region" description="Helical" evidence="2">
    <location>
        <begin position="245"/>
        <end position="265"/>
    </location>
</feature>
<feature type="topological domain" description="Cytoplasmic" evidence="2">
    <location>
        <begin position="266"/>
        <end position="276"/>
    </location>
</feature>
<protein>
    <recommendedName>
        <fullName>Ferrous iron permease EfeU</fullName>
    </recommendedName>
    <alternativeName>
        <fullName>Fe(2+) ion permease EfeU</fullName>
    </alternativeName>
    <alternativeName>
        <fullName>Ferrous iron uptake protein</fullName>
    </alternativeName>
</protein>
<proteinExistence type="evidence at protein level"/>
<dbReference type="EMBL" id="AE005174">
    <property type="protein sequence ID" value="AAG55635.1"/>
    <property type="status" value="ALT_INIT"/>
    <property type="molecule type" value="Genomic_DNA"/>
</dbReference>
<dbReference type="EMBL" id="BA000007">
    <property type="protein sequence ID" value="BAB34686.1"/>
    <property type="molecule type" value="Genomic_DNA"/>
</dbReference>
<dbReference type="PIR" id="G85646">
    <property type="entry name" value="G85646"/>
</dbReference>
<dbReference type="PIR" id="G90786">
    <property type="entry name" value="G90786"/>
</dbReference>
<dbReference type="RefSeq" id="NP_309290.1">
    <property type="nucleotide sequence ID" value="NC_002695.1"/>
</dbReference>
<dbReference type="RefSeq" id="WP_000497942.1">
    <property type="nucleotide sequence ID" value="NZ_VOAI01000026.1"/>
</dbReference>
<dbReference type="SMR" id="Q8XAS8"/>
<dbReference type="STRING" id="155864.Z1519"/>
<dbReference type="GeneID" id="912835"/>
<dbReference type="GeneID" id="93776392"/>
<dbReference type="KEGG" id="ece:Z1519"/>
<dbReference type="KEGG" id="ecs:ECs_1263"/>
<dbReference type="PATRIC" id="fig|386585.9.peg.1370"/>
<dbReference type="eggNOG" id="COG0672">
    <property type="taxonomic scope" value="Bacteria"/>
</dbReference>
<dbReference type="HOGENOM" id="CLU_077905_0_0_6"/>
<dbReference type="OMA" id="WYGTLLK"/>
<dbReference type="Proteomes" id="UP000000558">
    <property type="component" value="Chromosome"/>
</dbReference>
<dbReference type="Proteomes" id="UP000002519">
    <property type="component" value="Chromosome"/>
</dbReference>
<dbReference type="GO" id="GO:0033573">
    <property type="term" value="C:high-affinity iron permease complex"/>
    <property type="evidence" value="ECO:0007669"/>
    <property type="project" value="InterPro"/>
</dbReference>
<dbReference type="GO" id="GO:0015093">
    <property type="term" value="F:ferrous iron transmembrane transporter activity"/>
    <property type="evidence" value="ECO:0007669"/>
    <property type="project" value="TreeGrafter"/>
</dbReference>
<dbReference type="InterPro" id="IPR005217">
    <property type="entry name" value="EfeU/FTR1-like"/>
</dbReference>
<dbReference type="InterPro" id="IPR004923">
    <property type="entry name" value="FTR1/Fip1/EfeU"/>
</dbReference>
<dbReference type="InterPro" id="IPR036259">
    <property type="entry name" value="MFS_trans_sf"/>
</dbReference>
<dbReference type="NCBIfam" id="NF041756">
    <property type="entry name" value="EfeU"/>
    <property type="match status" value="1"/>
</dbReference>
<dbReference type="NCBIfam" id="TIGR00145">
    <property type="entry name" value="EfeU/Ftr1 family ferrous iron transporter subunit"/>
    <property type="match status" value="1"/>
</dbReference>
<dbReference type="PANTHER" id="PTHR31632">
    <property type="entry name" value="IRON TRANSPORTER FTH1"/>
    <property type="match status" value="1"/>
</dbReference>
<dbReference type="PANTHER" id="PTHR31632:SF2">
    <property type="entry name" value="PLASMA MEMBRANE IRON PERMEASE"/>
    <property type="match status" value="1"/>
</dbReference>
<dbReference type="Pfam" id="PF03239">
    <property type="entry name" value="FTR1"/>
    <property type="match status" value="1"/>
</dbReference>
<dbReference type="SUPFAM" id="SSF103473">
    <property type="entry name" value="MFS general substrate transporter"/>
    <property type="match status" value="1"/>
</dbReference>
<keyword id="KW-0997">Cell inner membrane</keyword>
<keyword id="KW-1003">Cell membrane</keyword>
<keyword id="KW-0406">Ion transport</keyword>
<keyword id="KW-0408">Iron</keyword>
<keyword id="KW-0410">Iron transport</keyword>
<keyword id="KW-0472">Membrane</keyword>
<keyword id="KW-1185">Reference proteome</keyword>
<keyword id="KW-0812">Transmembrane</keyword>
<keyword id="KW-1133">Transmembrane helix</keyword>
<keyword id="KW-0813">Transport</keyword>
<gene>
    <name type="primary">efeU</name>
    <name type="ordered locus">Z1519</name>
    <name type="ordered locus">ECs1263</name>
</gene>
<comment type="function">
    <text evidence="3">Uptake of Fe(2+) ions across the membrane.</text>
</comment>
<comment type="subunit">
    <text evidence="3">Part of a ferrous iron transporter composed of EfeU, EfeO and EfeB.</text>
</comment>
<comment type="subcellular location">
    <subcellularLocation>
        <location evidence="1">Cell inner membrane</location>
        <topology evidence="1">Multi-pass membrane protein</topology>
    </subcellularLocation>
</comment>
<comment type="similarity">
    <text evidence="4">Belongs to the oxidase-dependent Fe transporter (OFeT) (TC 9.A.10.1) family.</text>
</comment>
<comment type="sequence caution" evidence="4">
    <conflict type="erroneous initiation">
        <sequence resource="EMBL-CDS" id="AAG55635"/>
    </conflict>
    <text>Extended N-terminus.</text>
</comment>
<reference key="1">
    <citation type="journal article" date="2001" name="Nature">
        <title>Genome sequence of enterohaemorrhagic Escherichia coli O157:H7.</title>
        <authorList>
            <person name="Perna N.T."/>
            <person name="Plunkett G. III"/>
            <person name="Burland V."/>
            <person name="Mau B."/>
            <person name="Glasner J.D."/>
            <person name="Rose D.J."/>
            <person name="Mayhew G.F."/>
            <person name="Evans P.S."/>
            <person name="Gregor J."/>
            <person name="Kirkpatrick H.A."/>
            <person name="Posfai G."/>
            <person name="Hackett J."/>
            <person name="Klink S."/>
            <person name="Boutin A."/>
            <person name="Shao Y."/>
            <person name="Miller L."/>
            <person name="Grotbeck E.J."/>
            <person name="Davis N.W."/>
            <person name="Lim A."/>
            <person name="Dimalanta E.T."/>
            <person name="Potamousis K."/>
            <person name="Apodaca J."/>
            <person name="Anantharaman T.S."/>
            <person name="Lin J."/>
            <person name="Yen G."/>
            <person name="Schwartz D.C."/>
            <person name="Welch R.A."/>
            <person name="Blattner F.R."/>
        </authorList>
    </citation>
    <scope>NUCLEOTIDE SEQUENCE [LARGE SCALE GENOMIC DNA]</scope>
    <source>
        <strain>O157:H7 / EDL933 / ATCC 700927 / EHEC</strain>
    </source>
</reference>
<reference key="2">
    <citation type="journal article" date="2001" name="DNA Res.">
        <title>Complete genome sequence of enterohemorrhagic Escherichia coli O157:H7 and genomic comparison with a laboratory strain K-12.</title>
        <authorList>
            <person name="Hayashi T."/>
            <person name="Makino K."/>
            <person name="Ohnishi M."/>
            <person name="Kurokawa K."/>
            <person name="Ishii K."/>
            <person name="Yokoyama K."/>
            <person name="Han C.-G."/>
            <person name="Ohtsubo E."/>
            <person name="Nakayama K."/>
            <person name="Murata T."/>
            <person name="Tanaka M."/>
            <person name="Tobe T."/>
            <person name="Iida T."/>
            <person name="Takami H."/>
            <person name="Honda T."/>
            <person name="Sasakawa C."/>
            <person name="Ogasawara N."/>
            <person name="Yasunaga T."/>
            <person name="Kuhara S."/>
            <person name="Shiba T."/>
            <person name="Hattori M."/>
            <person name="Shinagawa H."/>
        </authorList>
    </citation>
    <scope>NUCLEOTIDE SEQUENCE [LARGE SCALE GENOMIC DNA]</scope>
    <source>
        <strain>O157:H7 / Sakai / RIMD 0509952 / EHEC</strain>
    </source>
</reference>
<reference key="3">
    <citation type="journal article" date="2007" name="Mol. Microbiol.">
        <title>EfeUOB (YcdNOB) is a tripartite, acid-induced and CpxAR-regulated, low-pH Fe2+ transporter that is cryptic in Escherichia coli K-12 but functional in E. coli O157:H7.</title>
        <authorList>
            <person name="Cao J."/>
            <person name="Woodhall M.R."/>
            <person name="Alvarez J."/>
            <person name="Cartron M.L."/>
            <person name="Andrews S.C."/>
        </authorList>
    </citation>
    <scope>FUNCTION</scope>
    <scope>SUBUNIT</scope>
    <source>
        <strain>O157:H7 / EDL933 / ATCC 700927 / EHEC</strain>
    </source>
</reference>
<sequence>MFVPFLIMLREGLEAALIVSLIASYLKRTQRGRWIGVMWIGVLLAAALCLGLGIFINETTGEFPQKEQELFEGIVAVIAVVILTWMVFWMRKVSRNVKVQLEQAVDSALQRGNHHGWALVMMVFFAVAREGLESVFFLLAAFQQDVGIWPPLGAMLGLATAVVLGFLLYWGGIRLNLGAFFKWTSLFILFVAAGLAAGAIRAFHEAGLWNHFQEIAFDMSAVLSTHSLFGTLMEGIFGYQEAPSVSEVAVWFIYLIPALVAFALPPRAGATASRSA</sequence>